<reference key="1">
    <citation type="journal article" date="2001" name="Science">
        <title>Comparative genomics of Listeria species.</title>
        <authorList>
            <person name="Glaser P."/>
            <person name="Frangeul L."/>
            <person name="Buchrieser C."/>
            <person name="Rusniok C."/>
            <person name="Amend A."/>
            <person name="Baquero F."/>
            <person name="Berche P."/>
            <person name="Bloecker H."/>
            <person name="Brandt P."/>
            <person name="Chakraborty T."/>
            <person name="Charbit A."/>
            <person name="Chetouani F."/>
            <person name="Couve E."/>
            <person name="de Daruvar A."/>
            <person name="Dehoux P."/>
            <person name="Domann E."/>
            <person name="Dominguez-Bernal G."/>
            <person name="Duchaud E."/>
            <person name="Durant L."/>
            <person name="Dussurget O."/>
            <person name="Entian K.-D."/>
            <person name="Fsihi H."/>
            <person name="Garcia-del Portillo F."/>
            <person name="Garrido P."/>
            <person name="Gautier L."/>
            <person name="Goebel W."/>
            <person name="Gomez-Lopez N."/>
            <person name="Hain T."/>
            <person name="Hauf J."/>
            <person name="Jackson D."/>
            <person name="Jones L.-M."/>
            <person name="Kaerst U."/>
            <person name="Kreft J."/>
            <person name="Kuhn M."/>
            <person name="Kunst F."/>
            <person name="Kurapkat G."/>
            <person name="Madueno E."/>
            <person name="Maitournam A."/>
            <person name="Mata Vicente J."/>
            <person name="Ng E."/>
            <person name="Nedjari H."/>
            <person name="Nordsiek G."/>
            <person name="Novella S."/>
            <person name="de Pablos B."/>
            <person name="Perez-Diaz J.-C."/>
            <person name="Purcell R."/>
            <person name="Remmel B."/>
            <person name="Rose M."/>
            <person name="Schlueter T."/>
            <person name="Simoes N."/>
            <person name="Tierrez A."/>
            <person name="Vazquez-Boland J.-A."/>
            <person name="Voss H."/>
            <person name="Wehland J."/>
            <person name="Cossart P."/>
        </authorList>
    </citation>
    <scope>NUCLEOTIDE SEQUENCE [LARGE SCALE GENOMIC DNA]</scope>
    <source>
        <strain>ATCC BAA-679 / EGD-e</strain>
    </source>
</reference>
<keyword id="KW-0028">Amino-acid biosynthesis</keyword>
<keyword id="KW-0032">Aminotransferase</keyword>
<keyword id="KW-0055">Arginine biosynthesis</keyword>
<keyword id="KW-0963">Cytoplasm</keyword>
<keyword id="KW-0663">Pyridoxal phosphate</keyword>
<keyword id="KW-1185">Reference proteome</keyword>
<keyword id="KW-0808">Transferase</keyword>
<feature type="chain" id="PRO_0000112754" description="Acetylornithine aminotransferase">
    <location>
        <begin position="1"/>
        <end position="386"/>
    </location>
</feature>
<feature type="binding site" evidence="1">
    <location>
        <begin position="94"/>
        <end position="95"/>
    </location>
    <ligand>
        <name>pyridoxal 5'-phosphate</name>
        <dbReference type="ChEBI" id="CHEBI:597326"/>
    </ligand>
</feature>
<feature type="binding site" evidence="1">
    <location>
        <position position="121"/>
    </location>
    <ligand>
        <name>pyridoxal 5'-phosphate</name>
        <dbReference type="ChEBI" id="CHEBI:597326"/>
    </ligand>
</feature>
<feature type="binding site" evidence="1">
    <location>
        <position position="124"/>
    </location>
    <ligand>
        <name>N(2)-acetyl-L-ornithine</name>
        <dbReference type="ChEBI" id="CHEBI:57805"/>
    </ligand>
</feature>
<feature type="binding site" evidence="1">
    <location>
        <begin position="206"/>
        <end position="209"/>
    </location>
    <ligand>
        <name>pyridoxal 5'-phosphate</name>
        <dbReference type="ChEBI" id="CHEBI:597326"/>
    </ligand>
</feature>
<feature type="binding site" evidence="1">
    <location>
        <position position="263"/>
    </location>
    <ligand>
        <name>N(2)-acetyl-L-ornithine</name>
        <dbReference type="ChEBI" id="CHEBI:57805"/>
    </ligand>
</feature>
<feature type="binding site" evidence="1">
    <location>
        <position position="264"/>
    </location>
    <ligand>
        <name>pyridoxal 5'-phosphate</name>
        <dbReference type="ChEBI" id="CHEBI:597326"/>
    </ligand>
</feature>
<feature type="modified residue" description="N6-(pyridoxal phosphate)lysine" evidence="1">
    <location>
        <position position="235"/>
    </location>
</feature>
<evidence type="ECO:0000255" key="1">
    <source>
        <dbReference type="HAMAP-Rule" id="MF_01107"/>
    </source>
</evidence>
<organism>
    <name type="scientific">Listeria monocytogenes serovar 1/2a (strain ATCC BAA-679 / EGD-e)</name>
    <dbReference type="NCBI Taxonomy" id="169963"/>
    <lineage>
        <taxon>Bacteria</taxon>
        <taxon>Bacillati</taxon>
        <taxon>Bacillota</taxon>
        <taxon>Bacilli</taxon>
        <taxon>Bacillales</taxon>
        <taxon>Listeriaceae</taxon>
        <taxon>Listeria</taxon>
    </lineage>
</organism>
<accession>Q8Y6U4</accession>
<comment type="catalytic activity">
    <reaction evidence="1">
        <text>N(2)-acetyl-L-ornithine + 2-oxoglutarate = N-acetyl-L-glutamate 5-semialdehyde + L-glutamate</text>
        <dbReference type="Rhea" id="RHEA:18049"/>
        <dbReference type="ChEBI" id="CHEBI:16810"/>
        <dbReference type="ChEBI" id="CHEBI:29123"/>
        <dbReference type="ChEBI" id="CHEBI:29985"/>
        <dbReference type="ChEBI" id="CHEBI:57805"/>
        <dbReference type="EC" id="2.6.1.11"/>
    </reaction>
</comment>
<comment type="cofactor">
    <cofactor evidence="1">
        <name>pyridoxal 5'-phosphate</name>
        <dbReference type="ChEBI" id="CHEBI:597326"/>
    </cofactor>
    <text evidence="1">Binds 1 pyridoxal phosphate per subunit.</text>
</comment>
<comment type="pathway">
    <text evidence="1">Amino-acid biosynthesis; L-arginine biosynthesis; N(2)-acetyl-L-ornithine from L-glutamate: step 4/4.</text>
</comment>
<comment type="subunit">
    <text evidence="1">Homodimer.</text>
</comment>
<comment type="subcellular location">
    <subcellularLocation>
        <location evidence="1">Cytoplasm</location>
    </subcellularLocation>
</comment>
<comment type="miscellaneous">
    <text evidence="1">May also have succinyldiaminopimelate aminotransferase activity, thus carrying out the corresponding step in lysine biosynthesis.</text>
</comment>
<comment type="similarity">
    <text evidence="1">Belongs to the class-III pyridoxal-phosphate-dependent aminotransferase family. ArgD subfamily.</text>
</comment>
<proteinExistence type="inferred from homology"/>
<dbReference type="EC" id="2.6.1.11" evidence="1"/>
<dbReference type="EMBL" id="AL591979">
    <property type="protein sequence ID" value="CAC99666.1"/>
    <property type="molecule type" value="Genomic_DNA"/>
</dbReference>
<dbReference type="PIR" id="AD1273">
    <property type="entry name" value="AD1273"/>
</dbReference>
<dbReference type="RefSeq" id="NP_465113.1">
    <property type="nucleotide sequence ID" value="NC_003210.1"/>
</dbReference>
<dbReference type="RefSeq" id="WP_003723317.1">
    <property type="nucleotide sequence ID" value="NZ_CP149495.1"/>
</dbReference>
<dbReference type="SMR" id="Q8Y6U4"/>
<dbReference type="STRING" id="169963.gene:17594245"/>
<dbReference type="PaxDb" id="169963-lmo1588"/>
<dbReference type="EnsemblBacteria" id="CAC99666">
    <property type="protein sequence ID" value="CAC99666"/>
    <property type="gene ID" value="CAC99666"/>
</dbReference>
<dbReference type="GeneID" id="984620"/>
<dbReference type="KEGG" id="lmo:lmo1588"/>
<dbReference type="PATRIC" id="fig|169963.11.peg.1630"/>
<dbReference type="eggNOG" id="COG4992">
    <property type="taxonomic scope" value="Bacteria"/>
</dbReference>
<dbReference type="HOGENOM" id="CLU_016922_10_1_9"/>
<dbReference type="OrthoDB" id="9807885at2"/>
<dbReference type="PhylomeDB" id="Q8Y6U4"/>
<dbReference type="BioCyc" id="LMON169963:LMO1588-MONOMER"/>
<dbReference type="UniPathway" id="UPA00068">
    <property type="reaction ID" value="UER00109"/>
</dbReference>
<dbReference type="Proteomes" id="UP000000817">
    <property type="component" value="Chromosome"/>
</dbReference>
<dbReference type="GO" id="GO:0005737">
    <property type="term" value="C:cytoplasm"/>
    <property type="evidence" value="ECO:0007669"/>
    <property type="project" value="UniProtKB-SubCell"/>
</dbReference>
<dbReference type="GO" id="GO:0042802">
    <property type="term" value="F:identical protein binding"/>
    <property type="evidence" value="ECO:0000318"/>
    <property type="project" value="GO_Central"/>
</dbReference>
<dbReference type="GO" id="GO:0003992">
    <property type="term" value="F:N2-acetyl-L-ornithine:2-oxoglutarate 5-aminotransferase activity"/>
    <property type="evidence" value="ECO:0007669"/>
    <property type="project" value="UniProtKB-UniRule"/>
</dbReference>
<dbReference type="GO" id="GO:0030170">
    <property type="term" value="F:pyridoxal phosphate binding"/>
    <property type="evidence" value="ECO:0000318"/>
    <property type="project" value="GO_Central"/>
</dbReference>
<dbReference type="GO" id="GO:0006526">
    <property type="term" value="P:L-arginine biosynthetic process"/>
    <property type="evidence" value="ECO:0007669"/>
    <property type="project" value="UniProtKB-UniRule"/>
</dbReference>
<dbReference type="CDD" id="cd00610">
    <property type="entry name" value="OAT_like"/>
    <property type="match status" value="1"/>
</dbReference>
<dbReference type="FunFam" id="3.40.640.10:FF:000004">
    <property type="entry name" value="Acetylornithine aminotransferase"/>
    <property type="match status" value="1"/>
</dbReference>
<dbReference type="Gene3D" id="3.90.1150.10">
    <property type="entry name" value="Aspartate Aminotransferase, domain 1"/>
    <property type="match status" value="1"/>
</dbReference>
<dbReference type="Gene3D" id="3.40.640.10">
    <property type="entry name" value="Type I PLP-dependent aspartate aminotransferase-like (Major domain)"/>
    <property type="match status" value="1"/>
</dbReference>
<dbReference type="HAMAP" id="MF_01107">
    <property type="entry name" value="ArgD_aminotrans_3"/>
    <property type="match status" value="1"/>
</dbReference>
<dbReference type="InterPro" id="IPR004636">
    <property type="entry name" value="AcOrn/SuccOrn_fam"/>
</dbReference>
<dbReference type="InterPro" id="IPR005814">
    <property type="entry name" value="Aminotrans_3"/>
</dbReference>
<dbReference type="InterPro" id="IPR049704">
    <property type="entry name" value="Aminotrans_3_PPA_site"/>
</dbReference>
<dbReference type="InterPro" id="IPR050103">
    <property type="entry name" value="Class-III_PLP-dep_AT"/>
</dbReference>
<dbReference type="InterPro" id="IPR015424">
    <property type="entry name" value="PyrdxlP-dep_Trfase"/>
</dbReference>
<dbReference type="InterPro" id="IPR015421">
    <property type="entry name" value="PyrdxlP-dep_Trfase_major"/>
</dbReference>
<dbReference type="InterPro" id="IPR015422">
    <property type="entry name" value="PyrdxlP-dep_Trfase_small"/>
</dbReference>
<dbReference type="NCBIfam" id="TIGR00707">
    <property type="entry name" value="argD"/>
    <property type="match status" value="1"/>
</dbReference>
<dbReference type="NCBIfam" id="NF002325">
    <property type="entry name" value="PRK01278.1"/>
    <property type="match status" value="1"/>
</dbReference>
<dbReference type="NCBIfam" id="NF002797">
    <property type="entry name" value="PRK02936.1"/>
    <property type="match status" value="1"/>
</dbReference>
<dbReference type="PANTHER" id="PTHR11986:SF79">
    <property type="entry name" value="ACETYLORNITHINE AMINOTRANSFERASE, MITOCHONDRIAL"/>
    <property type="match status" value="1"/>
</dbReference>
<dbReference type="PANTHER" id="PTHR11986">
    <property type="entry name" value="AMINOTRANSFERASE CLASS III"/>
    <property type="match status" value="1"/>
</dbReference>
<dbReference type="Pfam" id="PF00202">
    <property type="entry name" value="Aminotran_3"/>
    <property type="match status" value="1"/>
</dbReference>
<dbReference type="PIRSF" id="PIRSF000521">
    <property type="entry name" value="Transaminase_4ab_Lys_Orn"/>
    <property type="match status" value="1"/>
</dbReference>
<dbReference type="SUPFAM" id="SSF53383">
    <property type="entry name" value="PLP-dependent transferases"/>
    <property type="match status" value="1"/>
</dbReference>
<dbReference type="PROSITE" id="PS00600">
    <property type="entry name" value="AA_TRANSFER_CLASS_3"/>
    <property type="match status" value="1"/>
</dbReference>
<protein>
    <recommendedName>
        <fullName evidence="1">Acetylornithine aminotransferase</fullName>
        <shortName evidence="1">ACOAT</shortName>
        <ecNumber evidence="1">2.6.1.11</ecNumber>
    </recommendedName>
</protein>
<name>ARGD_LISMO</name>
<gene>
    <name evidence="1" type="primary">argD</name>
    <name type="ordered locus">lmo1588</name>
</gene>
<sequence length="386" mass="41499">MKHVFPTYKRFPIDLVNGTGTVVTDKNGKTYLDFTSGIAVCNLGHCPTNVAEAVQQQLGNIWHTSNLYECALQDSVAELIADGKERLVFFCNSGTESNEAALKLARKYTGKEKIITFEKSFHGRTFGSMSATGQAKIHQGFGELVPGFTYVPYNDIEAFRAEIDENTAAVMLEVIQAEGGVIPANAAFLLEVQLLCKKMGALLIIDEVQTGLGRTGTLYGFEQIGLDPDIFTLAKGLGNGLPIGAMVGKSDLISAFGPGSHGSTFGGNKLALAAAKEILLTMKQTGFLEEVNAKADYFRNLLEANLEVLDNVSDIRGGGFLIGIELENAAEPVITELRDKGLLILTAGTNVLRILPPLTVSYAEIDQAIYLLKSVLENQLIGSEEG</sequence>